<protein>
    <recommendedName>
        <fullName evidence="9">Dermonecrotic toxin LgSicTox-alphaIC1</fullName>
        <ecNumber evidence="4">4.6.1.-</ecNumber>
    </recommendedName>
    <alternativeName>
        <fullName>Phospholipase D</fullName>
        <shortName>PLD</shortName>
    </alternativeName>
    <alternativeName>
        <fullName evidence="8">Phospholipase D LgRec1</fullName>
    </alternativeName>
    <alternativeName>
        <fullName>Sphingomyelin phosphodiesterase D</fullName>
        <shortName>SMD</shortName>
        <shortName>SMase D</shortName>
        <shortName>Sphingomyelinase D</shortName>
    </alternativeName>
    <component>
        <recommendedName>
            <fullName evidence="13">U1-sicaritoxin-Lg1a</fullName>
            <shortName evidence="10">U1-SCRTX-Lg1a</shortName>
        </recommendedName>
        <alternativeName>
            <fullName evidence="10">Anionic antimicrobial peptide</fullName>
            <shortName evidence="10">AAMP</shortName>
        </alternativeName>
        <alternativeName>
            <fullName evidence="10">Lg-AMP1</fullName>
        </alternativeName>
    </component>
</protein>
<sequence>ADNRRPIWVMGHMVNSLAQIDEFVGLGSNSIETDVSFDKQANPEYTYHGIPCDCGRACLHSTKFNDFLKGLRKVTTPGDSKYLEKLILVVFDLKTGSLYDNQAYDAGTKLAKNLLQHYWNNGNNGGRAYIILSIPNLNHYKLITGFKETLKNEGHEELLEKVGTDFSGNDDISDVQKTYNKAGVTGHVWQSDGITNCLLRGLTRVKAAVANRDSGSGIINKVYYWTVDKRQSTRDTLDANVDGIMTNYPDITVEILNEAAYKKKFRIATYEDNPWETFKG</sequence>
<comment type="function">
    <molecule>Dermonecrotic toxin LgSicTox-alphaIC1</molecule>
    <text evidence="1 6">Dermonecrotic toxins cleave the phosphodiester linkage between the phosphate and headgroup of certain phospholipids (sphingolipid and lysolipid substrates), forming an alcohol (often choline) and a cyclic phosphate (By similarity). This toxin acts on sphingomyelin (SM) with high activity (PubMed:23770445). It may also act on ceramide phosphoethanolamine (CPE), lysophosphatidylcholine (LPC) and lysophosphatidylethanolamine (LPE), but not on lysophosphatidylserine (LPS), and lysophosphatidylglycerol (LPG) (By similarity). It acts by transphosphatidylation, releasing exclusively cyclic phosphate products as second products (By similarity). Induces platelet aggregation in platelet rich plasma, but not in washed platelet, indicating that this activity is dependent on plasma components (PubMed:23770445). Also induces hemolysis (PubMed:23770445). In vivo, the recombinant protein evokes an intense inflammatory reaction and dermonecrosis, similar to those induced by L.gaucho total venom (PubMed:23770445). Is a good immunogen, capable of inducing immunoprotection in test animals (PubMed:23770445).</text>
</comment>
<comment type="function">
    <molecule>U1-sicaritoxin-Lg1a</molecule>
    <text evidence="7">Anionic antimicrobial peptide that shows antimicrobial activity against Gram-negative bacteria (MIC=1.15-4.6 uM) (tested on E.coli, P.aeruginosa, and E.cloacae), but not on Gram-negative bacteria (M.luteus, S.aureus, and B.subtilis), neither on fungi and yeasts (A.niger, C.albicans and C.krusei). Does not show hemolytic effects against human erythrocytes, and has no cytotoxic effects against human cervical carcinoma cells (HeLa).</text>
</comment>
<comment type="catalytic activity">
    <reaction evidence="12">
        <text>an N-(acyl)-sphingosylphosphocholine = an N-(acyl)-sphingosyl-1,3-cyclic phosphate + choline</text>
        <dbReference type="Rhea" id="RHEA:60652"/>
        <dbReference type="ChEBI" id="CHEBI:15354"/>
        <dbReference type="ChEBI" id="CHEBI:64583"/>
        <dbReference type="ChEBI" id="CHEBI:143892"/>
    </reaction>
</comment>
<comment type="catalytic activity">
    <reaction evidence="1">
        <text>an N-(acyl)-sphingosylphosphoethanolamine = an N-(acyl)-sphingosyl-1,3-cyclic phosphate + ethanolamine</text>
        <dbReference type="Rhea" id="RHEA:60648"/>
        <dbReference type="ChEBI" id="CHEBI:57603"/>
        <dbReference type="ChEBI" id="CHEBI:143891"/>
        <dbReference type="ChEBI" id="CHEBI:143892"/>
    </reaction>
</comment>
<comment type="catalytic activity">
    <reaction evidence="1">
        <text>a 1-acyl-sn-glycero-3-phosphocholine = a 1-acyl-sn-glycero-2,3-cyclic phosphate + choline</text>
        <dbReference type="Rhea" id="RHEA:60700"/>
        <dbReference type="ChEBI" id="CHEBI:15354"/>
        <dbReference type="ChEBI" id="CHEBI:58168"/>
        <dbReference type="ChEBI" id="CHEBI:143947"/>
    </reaction>
</comment>
<comment type="catalytic activity">
    <reaction evidence="1">
        <text>a 1-acyl-sn-glycero-3-phosphoethanolamine = a 1-acyl-sn-glycero-2,3-cyclic phosphate + ethanolamine</text>
        <dbReference type="Rhea" id="RHEA:60704"/>
        <dbReference type="ChEBI" id="CHEBI:57603"/>
        <dbReference type="ChEBI" id="CHEBI:64381"/>
        <dbReference type="ChEBI" id="CHEBI:143947"/>
    </reaction>
</comment>
<comment type="cofactor">
    <cofactor evidence="5">
        <name>Mg(2+)</name>
        <dbReference type="ChEBI" id="CHEBI:18420"/>
    </cofactor>
    <text evidence="5">Binds 1 Mg(2+) ion per subunit.</text>
</comment>
<comment type="subcellular location">
    <subcellularLocation>
        <location evidence="7">Secreted</location>
    </subcellularLocation>
</comment>
<comment type="tissue specificity">
    <text evidence="12 13">Expressed by the venom gland.</text>
</comment>
<comment type="mass spectrometry">
    <molecule>U1-sicaritoxin-Lg1a</molecule>
    <text>Monoisotopic mass.</text>
</comment>
<comment type="similarity">
    <text evidence="11">Belongs to the arthropod phospholipase D family. Class II subfamily.</text>
</comment>
<comment type="caution">
    <text evidence="1 2 4">The most common activity assay for dermonecrotic toxins detects enzymatic activity by monitoring choline release from substrate. Liberation of choline from sphingomyelin (SM) or lysophosphatidylcholine (LPC) is commonly assumed to result from substrate hydrolysis, giving either ceramide-1-phosphate (C1P) or lysophosphatidic acid (LPA), respectively, as a second product. However, two studies from Lajoie and colleagues (2013 and 2015) report the observation of exclusive formation of cyclic phosphate products as second products, resulting from intramolecular transphosphatidylation. Cyclic phosphates have vastly different biological properties from their monoester counterparts, and they may be relevant to the pathology of brown spider envenomation.</text>
</comment>
<organism>
    <name type="scientific">Loxosceles gaucho</name>
    <name type="common">Spider</name>
    <dbReference type="NCBI Taxonomy" id="58216"/>
    <lineage>
        <taxon>Eukaryota</taxon>
        <taxon>Metazoa</taxon>
        <taxon>Ecdysozoa</taxon>
        <taxon>Arthropoda</taxon>
        <taxon>Chelicerata</taxon>
        <taxon>Arachnida</taxon>
        <taxon>Araneae</taxon>
        <taxon>Araneomorphae</taxon>
        <taxon>Haplogynae</taxon>
        <taxon>Scytodoidea</taxon>
        <taxon>Sicariidae</taxon>
        <taxon>Loxosceles</taxon>
    </lineage>
</organism>
<evidence type="ECO:0000250" key="1">
    <source>
        <dbReference type="UniProtKB" id="A0A0D4WTV1"/>
    </source>
</evidence>
<evidence type="ECO:0000250" key="2">
    <source>
        <dbReference type="UniProtKB" id="A0A0D4WV12"/>
    </source>
</evidence>
<evidence type="ECO:0000250" key="3">
    <source>
        <dbReference type="UniProtKB" id="P0CE80"/>
    </source>
</evidence>
<evidence type="ECO:0000250" key="4">
    <source>
        <dbReference type="UniProtKB" id="Q4ZFU2"/>
    </source>
</evidence>
<evidence type="ECO:0000250" key="5">
    <source>
        <dbReference type="UniProtKB" id="Q8I914"/>
    </source>
</evidence>
<evidence type="ECO:0000269" key="6">
    <source>
    </source>
</evidence>
<evidence type="ECO:0000269" key="7">
    <source>
    </source>
</evidence>
<evidence type="ECO:0000303" key="8">
    <source>
    </source>
</evidence>
<evidence type="ECO:0000303" key="9">
    <source>
    </source>
</evidence>
<evidence type="ECO:0000303" key="10">
    <source>
    </source>
</evidence>
<evidence type="ECO:0000305" key="11"/>
<evidence type="ECO:0000305" key="12">
    <source>
    </source>
</evidence>
<evidence type="ECO:0000305" key="13">
    <source>
    </source>
</evidence>
<keyword id="KW-0044">Antibiotic</keyword>
<keyword id="KW-0929">Antimicrobial</keyword>
<keyword id="KW-0204">Cytolysis</keyword>
<keyword id="KW-1061">Dermonecrotic toxin</keyword>
<keyword id="KW-0903">Direct protein sequencing</keyword>
<keyword id="KW-1015">Disulfide bond</keyword>
<keyword id="KW-0354">Hemolysis</keyword>
<keyword id="KW-0442">Lipid degradation</keyword>
<keyword id="KW-0443">Lipid metabolism</keyword>
<keyword id="KW-0456">Lyase</keyword>
<keyword id="KW-0460">Magnesium</keyword>
<keyword id="KW-0479">Metal-binding</keyword>
<keyword id="KW-0964">Secreted</keyword>
<keyword id="KW-0800">Toxin</keyword>
<dbReference type="EC" id="4.6.1.-" evidence="4"/>
<dbReference type="EMBL" id="JX866729">
    <property type="protein sequence ID" value="AFY98967.1"/>
    <property type="molecule type" value="mRNA"/>
</dbReference>
<dbReference type="SMR" id="K9USW8"/>
<dbReference type="BRENDA" id="3.1.4.41">
    <property type="organism ID" value="10588"/>
</dbReference>
<dbReference type="GO" id="GO:0005576">
    <property type="term" value="C:extracellular region"/>
    <property type="evidence" value="ECO:0007669"/>
    <property type="project" value="UniProtKB-SubCell"/>
</dbReference>
<dbReference type="GO" id="GO:0016829">
    <property type="term" value="F:lyase activity"/>
    <property type="evidence" value="ECO:0007669"/>
    <property type="project" value="UniProtKB-KW"/>
</dbReference>
<dbReference type="GO" id="GO:0046872">
    <property type="term" value="F:metal ion binding"/>
    <property type="evidence" value="ECO:0007669"/>
    <property type="project" value="UniProtKB-KW"/>
</dbReference>
<dbReference type="GO" id="GO:0008081">
    <property type="term" value="F:phosphoric diester hydrolase activity"/>
    <property type="evidence" value="ECO:0007669"/>
    <property type="project" value="InterPro"/>
</dbReference>
<dbReference type="GO" id="GO:0090729">
    <property type="term" value="F:toxin activity"/>
    <property type="evidence" value="ECO:0007669"/>
    <property type="project" value="UniProtKB-KW"/>
</dbReference>
<dbReference type="GO" id="GO:0042742">
    <property type="term" value="P:defense response to bacterium"/>
    <property type="evidence" value="ECO:0007669"/>
    <property type="project" value="UniProtKB-KW"/>
</dbReference>
<dbReference type="GO" id="GO:0031640">
    <property type="term" value="P:killing of cells of another organism"/>
    <property type="evidence" value="ECO:0007669"/>
    <property type="project" value="UniProtKB-KW"/>
</dbReference>
<dbReference type="GO" id="GO:0016042">
    <property type="term" value="P:lipid catabolic process"/>
    <property type="evidence" value="ECO:0007669"/>
    <property type="project" value="UniProtKB-KW"/>
</dbReference>
<dbReference type="CDD" id="cd08576">
    <property type="entry name" value="GDPD_like_SMaseD_PLD"/>
    <property type="match status" value="1"/>
</dbReference>
<dbReference type="Gene3D" id="3.20.20.190">
    <property type="entry name" value="Phosphatidylinositol (PI) phosphodiesterase"/>
    <property type="match status" value="1"/>
</dbReference>
<dbReference type="InterPro" id="IPR017946">
    <property type="entry name" value="PLC-like_Pdiesterase_TIM-brl"/>
</dbReference>
<dbReference type="SUPFAM" id="SSF51695">
    <property type="entry name" value="PLC-like phosphodiesterases"/>
    <property type="match status" value="1"/>
</dbReference>
<reference key="1">
    <citation type="journal article" date="2013" name="Biochimie">
        <title>Cloning, expression and characterization of a phospholipase D from Loxosceles gaucho venom gland.</title>
        <authorList>
            <person name="Magalhaes G.S."/>
            <person name="Caporrino M.C."/>
            <person name="Della-Casa M.S."/>
            <person name="Kimura L.F."/>
            <person name="Prezotto-Neto J.P."/>
            <person name="Fukuda D.A."/>
            <person name="Portes-Junior J.A."/>
            <person name="Neves-Ferreira A.G."/>
            <person name="Santoro M.L."/>
            <person name="Barbaro K.C."/>
        </authorList>
    </citation>
    <scope>NUCLEOTIDE SEQUENCE [MRNA]</scope>
    <scope>FUNCTION</scope>
    <scope>CATALYTIC ACTIVITY</scope>
    <source>
        <tissue>Venom gland</tissue>
    </source>
</reference>
<reference key="2">
    <citation type="journal article" date="2018" name="Toxins">
        <title>Loxosceles gaucho spider venom: an untapped source of antimicrobial agents.</title>
        <authorList>
            <person name="Segura-Ramirez P.J."/>
            <person name="Silva Junior P.I."/>
        </authorList>
    </citation>
    <scope>PROTEIN SEQUENCE OF 162-177</scope>
    <scope>FUNCTION</scope>
    <scope>MASS SPECTROMETRY</scope>
    <scope>SUBCELLULAR LOCATION</scope>
    <source>
        <tissue>Venom</tissue>
    </source>
</reference>
<reference key="3">
    <citation type="journal article" date="2015" name="J. Biol. Chem.">
        <title>Variable substrate preference among phospholipase D toxins from Sicariid spiders.</title>
        <authorList>
            <person name="Lajoie D.M."/>
            <person name="Roberts S.A."/>
            <person name="Zobel-Thropp P.A."/>
            <person name="Delahaye J.L."/>
            <person name="Bandarian V."/>
            <person name="Binford G.J."/>
            <person name="Cordes M.H."/>
        </authorList>
    </citation>
    <scope>NOMENCLATURE</scope>
</reference>
<feature type="chain" id="PRO_0000423639" description="Dermonecrotic toxin LgSicTox-alphaIC1">
    <location>
        <begin position="1"/>
        <end position="280"/>
    </location>
</feature>
<feature type="peptide" id="PRO_0000448551" description="U1-sicaritoxin-Lg1a" evidence="7">
    <location>
        <begin position="162"/>
        <end position="177"/>
    </location>
</feature>
<feature type="active site" evidence="5">
    <location>
        <position position="12"/>
    </location>
</feature>
<feature type="active site" description="Nucleophile" evidence="5">
    <location>
        <position position="48"/>
    </location>
</feature>
<feature type="binding site" evidence="5">
    <location>
        <position position="32"/>
    </location>
    <ligand>
        <name>Mg(2+)</name>
        <dbReference type="ChEBI" id="CHEBI:18420"/>
    </ligand>
</feature>
<feature type="binding site" evidence="5">
    <location>
        <position position="34"/>
    </location>
    <ligand>
        <name>Mg(2+)</name>
        <dbReference type="ChEBI" id="CHEBI:18420"/>
    </ligand>
</feature>
<feature type="binding site" evidence="5">
    <location>
        <position position="92"/>
    </location>
    <ligand>
        <name>Mg(2+)</name>
        <dbReference type="ChEBI" id="CHEBI:18420"/>
    </ligand>
</feature>
<feature type="disulfide bond" evidence="3">
    <location>
        <begin position="52"/>
        <end position="58"/>
    </location>
</feature>
<feature type="disulfide bond" evidence="3">
    <location>
        <begin position="54"/>
        <end position="197"/>
    </location>
</feature>
<name>A1O_LOXGA</name>
<accession>K9USW8</accession>
<proteinExistence type="evidence at protein level"/>